<organism>
    <name type="scientific">Aromatoleum aromaticum (strain DSM 19018 / LMG 30748 / EbN1)</name>
    <name type="common">Azoarcus sp. (strain EbN1)</name>
    <dbReference type="NCBI Taxonomy" id="76114"/>
    <lineage>
        <taxon>Bacteria</taxon>
        <taxon>Pseudomonadati</taxon>
        <taxon>Pseudomonadota</taxon>
        <taxon>Betaproteobacteria</taxon>
        <taxon>Rhodocyclales</taxon>
        <taxon>Rhodocyclaceae</taxon>
        <taxon>Aromatoleum</taxon>
    </lineage>
</organism>
<dbReference type="EC" id="6.1.1.10" evidence="1"/>
<dbReference type="EMBL" id="CR555306">
    <property type="protein sequence ID" value="CAI08625.1"/>
    <property type="molecule type" value="Genomic_DNA"/>
</dbReference>
<dbReference type="RefSeq" id="WP_011238311.1">
    <property type="nucleotide sequence ID" value="NC_006513.1"/>
</dbReference>
<dbReference type="SMR" id="Q5P239"/>
<dbReference type="STRING" id="76114.ebA4404"/>
<dbReference type="KEGG" id="eba:ebA4404"/>
<dbReference type="eggNOG" id="COG0073">
    <property type="taxonomic scope" value="Bacteria"/>
</dbReference>
<dbReference type="eggNOG" id="COG0143">
    <property type="taxonomic scope" value="Bacteria"/>
</dbReference>
<dbReference type="HOGENOM" id="CLU_009710_7_0_4"/>
<dbReference type="OrthoDB" id="9810191at2"/>
<dbReference type="Proteomes" id="UP000006552">
    <property type="component" value="Chromosome"/>
</dbReference>
<dbReference type="GO" id="GO:0005829">
    <property type="term" value="C:cytosol"/>
    <property type="evidence" value="ECO:0007669"/>
    <property type="project" value="TreeGrafter"/>
</dbReference>
<dbReference type="GO" id="GO:0005524">
    <property type="term" value="F:ATP binding"/>
    <property type="evidence" value="ECO:0007669"/>
    <property type="project" value="UniProtKB-UniRule"/>
</dbReference>
<dbReference type="GO" id="GO:0046872">
    <property type="term" value="F:metal ion binding"/>
    <property type="evidence" value="ECO:0007669"/>
    <property type="project" value="UniProtKB-KW"/>
</dbReference>
<dbReference type="GO" id="GO:0004825">
    <property type="term" value="F:methionine-tRNA ligase activity"/>
    <property type="evidence" value="ECO:0007669"/>
    <property type="project" value="UniProtKB-UniRule"/>
</dbReference>
<dbReference type="GO" id="GO:0000049">
    <property type="term" value="F:tRNA binding"/>
    <property type="evidence" value="ECO:0007669"/>
    <property type="project" value="UniProtKB-KW"/>
</dbReference>
<dbReference type="GO" id="GO:0006431">
    <property type="term" value="P:methionyl-tRNA aminoacylation"/>
    <property type="evidence" value="ECO:0007669"/>
    <property type="project" value="UniProtKB-UniRule"/>
</dbReference>
<dbReference type="CDD" id="cd07957">
    <property type="entry name" value="Anticodon_Ia_Met"/>
    <property type="match status" value="1"/>
</dbReference>
<dbReference type="CDD" id="cd00814">
    <property type="entry name" value="MetRS_core"/>
    <property type="match status" value="1"/>
</dbReference>
<dbReference type="CDD" id="cd02800">
    <property type="entry name" value="tRNA_bind_EcMetRS_like"/>
    <property type="match status" value="1"/>
</dbReference>
<dbReference type="FunFam" id="1.10.730.10:FF:000005">
    <property type="entry name" value="Methionine--tRNA ligase"/>
    <property type="match status" value="1"/>
</dbReference>
<dbReference type="FunFam" id="2.20.28.20:FF:000001">
    <property type="entry name" value="Methionine--tRNA ligase"/>
    <property type="match status" value="1"/>
</dbReference>
<dbReference type="FunFam" id="2.40.50.140:FF:000042">
    <property type="entry name" value="Methionine--tRNA ligase"/>
    <property type="match status" value="1"/>
</dbReference>
<dbReference type="Gene3D" id="3.40.50.620">
    <property type="entry name" value="HUPs"/>
    <property type="match status" value="1"/>
</dbReference>
<dbReference type="Gene3D" id="1.10.730.10">
    <property type="entry name" value="Isoleucyl-tRNA Synthetase, Domain 1"/>
    <property type="match status" value="1"/>
</dbReference>
<dbReference type="Gene3D" id="2.20.28.20">
    <property type="entry name" value="Methionyl-tRNA synthetase, Zn-domain"/>
    <property type="match status" value="1"/>
</dbReference>
<dbReference type="Gene3D" id="2.40.50.140">
    <property type="entry name" value="Nucleic acid-binding proteins"/>
    <property type="match status" value="1"/>
</dbReference>
<dbReference type="HAMAP" id="MF_00098">
    <property type="entry name" value="Met_tRNA_synth_type1"/>
    <property type="match status" value="1"/>
</dbReference>
<dbReference type="InterPro" id="IPR001412">
    <property type="entry name" value="aa-tRNA-synth_I_CS"/>
</dbReference>
<dbReference type="InterPro" id="IPR041872">
    <property type="entry name" value="Anticodon_Met"/>
</dbReference>
<dbReference type="InterPro" id="IPR004495">
    <property type="entry name" value="Met-tRNA-synth_bsu_C"/>
</dbReference>
<dbReference type="InterPro" id="IPR023458">
    <property type="entry name" value="Met-tRNA_ligase_1"/>
</dbReference>
<dbReference type="InterPro" id="IPR014758">
    <property type="entry name" value="Met-tRNA_synth"/>
</dbReference>
<dbReference type="InterPro" id="IPR015413">
    <property type="entry name" value="Methionyl/Leucyl_tRNA_Synth"/>
</dbReference>
<dbReference type="InterPro" id="IPR033911">
    <property type="entry name" value="MetRS_core"/>
</dbReference>
<dbReference type="InterPro" id="IPR029038">
    <property type="entry name" value="MetRS_Zn"/>
</dbReference>
<dbReference type="InterPro" id="IPR012340">
    <property type="entry name" value="NA-bd_OB-fold"/>
</dbReference>
<dbReference type="InterPro" id="IPR014729">
    <property type="entry name" value="Rossmann-like_a/b/a_fold"/>
</dbReference>
<dbReference type="InterPro" id="IPR002547">
    <property type="entry name" value="tRNA-bd_dom"/>
</dbReference>
<dbReference type="InterPro" id="IPR009080">
    <property type="entry name" value="tRNAsynth_Ia_anticodon-bd"/>
</dbReference>
<dbReference type="NCBIfam" id="TIGR00398">
    <property type="entry name" value="metG"/>
    <property type="match status" value="1"/>
</dbReference>
<dbReference type="NCBIfam" id="TIGR00399">
    <property type="entry name" value="metG_C_term"/>
    <property type="match status" value="1"/>
</dbReference>
<dbReference type="NCBIfam" id="NF001100">
    <property type="entry name" value="PRK00133.1"/>
    <property type="match status" value="1"/>
</dbReference>
<dbReference type="PANTHER" id="PTHR45765">
    <property type="entry name" value="METHIONINE--TRNA LIGASE"/>
    <property type="match status" value="1"/>
</dbReference>
<dbReference type="PANTHER" id="PTHR45765:SF1">
    <property type="entry name" value="METHIONINE--TRNA LIGASE, CYTOPLASMIC"/>
    <property type="match status" value="1"/>
</dbReference>
<dbReference type="Pfam" id="PF19303">
    <property type="entry name" value="Anticodon_3"/>
    <property type="match status" value="1"/>
</dbReference>
<dbReference type="Pfam" id="PF09334">
    <property type="entry name" value="tRNA-synt_1g"/>
    <property type="match status" value="1"/>
</dbReference>
<dbReference type="Pfam" id="PF01588">
    <property type="entry name" value="tRNA_bind"/>
    <property type="match status" value="1"/>
</dbReference>
<dbReference type="PRINTS" id="PR01041">
    <property type="entry name" value="TRNASYNTHMET"/>
</dbReference>
<dbReference type="SUPFAM" id="SSF47323">
    <property type="entry name" value="Anticodon-binding domain of a subclass of class I aminoacyl-tRNA synthetases"/>
    <property type="match status" value="1"/>
</dbReference>
<dbReference type="SUPFAM" id="SSF57770">
    <property type="entry name" value="Methionyl-tRNA synthetase (MetRS), Zn-domain"/>
    <property type="match status" value="1"/>
</dbReference>
<dbReference type="SUPFAM" id="SSF50249">
    <property type="entry name" value="Nucleic acid-binding proteins"/>
    <property type="match status" value="1"/>
</dbReference>
<dbReference type="SUPFAM" id="SSF52374">
    <property type="entry name" value="Nucleotidylyl transferase"/>
    <property type="match status" value="1"/>
</dbReference>
<dbReference type="PROSITE" id="PS00178">
    <property type="entry name" value="AA_TRNA_LIGASE_I"/>
    <property type="match status" value="1"/>
</dbReference>
<dbReference type="PROSITE" id="PS50886">
    <property type="entry name" value="TRBD"/>
    <property type="match status" value="1"/>
</dbReference>
<accession>Q5P239</accession>
<proteinExistence type="inferred from homology"/>
<reference key="1">
    <citation type="journal article" date="2005" name="Arch. Microbiol.">
        <title>The genome sequence of an anaerobic aromatic-degrading denitrifying bacterium, strain EbN1.</title>
        <authorList>
            <person name="Rabus R."/>
            <person name="Kube M."/>
            <person name="Heider J."/>
            <person name="Beck A."/>
            <person name="Heitmann K."/>
            <person name="Widdel F."/>
            <person name="Reinhardt R."/>
        </authorList>
    </citation>
    <scope>NUCLEOTIDE SEQUENCE [LARGE SCALE GENOMIC DNA]</scope>
    <source>
        <strain>DSM 19018 / LMG 30748 / EbN1</strain>
    </source>
</reference>
<evidence type="ECO:0000255" key="1">
    <source>
        <dbReference type="HAMAP-Rule" id="MF_00098"/>
    </source>
</evidence>
<evidence type="ECO:0000256" key="2">
    <source>
        <dbReference type="SAM" id="MobiDB-lite"/>
    </source>
</evidence>
<comment type="function">
    <text evidence="1">Is required not only for elongation of protein synthesis but also for the initiation of all mRNA translation through initiator tRNA(fMet) aminoacylation.</text>
</comment>
<comment type="catalytic activity">
    <reaction evidence="1">
        <text>tRNA(Met) + L-methionine + ATP = L-methionyl-tRNA(Met) + AMP + diphosphate</text>
        <dbReference type="Rhea" id="RHEA:13481"/>
        <dbReference type="Rhea" id="RHEA-COMP:9667"/>
        <dbReference type="Rhea" id="RHEA-COMP:9698"/>
        <dbReference type="ChEBI" id="CHEBI:30616"/>
        <dbReference type="ChEBI" id="CHEBI:33019"/>
        <dbReference type="ChEBI" id="CHEBI:57844"/>
        <dbReference type="ChEBI" id="CHEBI:78442"/>
        <dbReference type="ChEBI" id="CHEBI:78530"/>
        <dbReference type="ChEBI" id="CHEBI:456215"/>
        <dbReference type="EC" id="6.1.1.10"/>
    </reaction>
</comment>
<comment type="cofactor">
    <cofactor evidence="1">
        <name>Zn(2+)</name>
        <dbReference type="ChEBI" id="CHEBI:29105"/>
    </cofactor>
    <text evidence="1">Binds 1 zinc ion per subunit.</text>
</comment>
<comment type="subunit">
    <text evidence="1">Homodimer.</text>
</comment>
<comment type="subcellular location">
    <subcellularLocation>
        <location evidence="1">Cytoplasm</location>
    </subcellularLocation>
</comment>
<comment type="similarity">
    <text evidence="1">Belongs to the class-I aminoacyl-tRNA synthetase family. MetG type 1 subfamily.</text>
</comment>
<gene>
    <name evidence="1" type="primary">metG</name>
    <name type="ordered locus">AZOSEA25000</name>
    <name type="ORF">ebA4404</name>
</gene>
<keyword id="KW-0030">Aminoacyl-tRNA synthetase</keyword>
<keyword id="KW-0067">ATP-binding</keyword>
<keyword id="KW-0963">Cytoplasm</keyword>
<keyword id="KW-0436">Ligase</keyword>
<keyword id="KW-0479">Metal-binding</keyword>
<keyword id="KW-0547">Nucleotide-binding</keyword>
<keyword id="KW-0648">Protein biosynthesis</keyword>
<keyword id="KW-1185">Reference proteome</keyword>
<keyword id="KW-0694">RNA-binding</keyword>
<keyword id="KW-0820">tRNA-binding</keyword>
<keyword id="KW-0862">Zinc</keyword>
<sequence length="718" mass="79527">MPRKILVTNALPYANGDIHLGHLVGYIQGDIWVRYQRMRGNTVHYVCADDTHGTPVMLRAEKEGITPEALIGRVHGEHLRDFTDFGVAFDNYHSTHSVENRAYAEDVYTKLKAAELIDTRAIEQFYDPVKEMFLPDRFIKGECPKCGAADQYGDNCEACGAAYAPTELKNPHSAVSGAKPVLKTSEHYFFRLSDPRAVAFLREWTRGTNAAGTRRLQVEAANKMKEWLGDETVGDGGNTLSDWDISRDAPYFGFEIPGAPGKYFYVWLDAPIGYFASFRNLAEQRGDIAVDDFTDAVRAETAGTEMVHFIGKDILYFHALFWPAMLRFAGYRTPTQLCVNGFLTVDGAKMSKSRGTFITARSYVSRGLNPEWLRYYFATKSNGTMEDVDLSLDDMVAKVNSDLVGKYVNIASRCAGFIAKRFDGKLGASDPQATADFEAAFAAGTIAHAYEERDYGRALREIMRLADLANQYVNDHKPWELAKQEGQEAHLHVVCSTALTHFRDLTLYLKPVLPALAQKVEAFLAIDPLVWPQTWQPLPAAHTINPYAHLMTRVERKQIDALLEANRESLAPAAPAAKVASSQQRHAEKQQHEAQSAETAMPHISIDDFTKVDLRIARIVGAEHVEGADKLIRLRLDIGESENGQAKLRQVFAGIKSAYDPATLVGRLTVMVANLAPRKMKFGVSEGMVLAASSADDKSSGIYLLSPDTGAASGMRVK</sequence>
<feature type="chain" id="PRO_0000139097" description="Methionine--tRNA ligase">
    <location>
        <begin position="1"/>
        <end position="718"/>
    </location>
</feature>
<feature type="domain" description="tRNA-binding" evidence="1">
    <location>
        <begin position="608"/>
        <end position="718"/>
    </location>
</feature>
<feature type="region of interest" description="Disordered" evidence="2">
    <location>
        <begin position="573"/>
        <end position="599"/>
    </location>
</feature>
<feature type="short sequence motif" description="'HIGH' region">
    <location>
        <begin position="12"/>
        <end position="22"/>
    </location>
</feature>
<feature type="short sequence motif" description="'KMSKS' region">
    <location>
        <begin position="349"/>
        <end position="353"/>
    </location>
</feature>
<feature type="binding site" evidence="1">
    <location>
        <position position="143"/>
    </location>
    <ligand>
        <name>Zn(2+)</name>
        <dbReference type="ChEBI" id="CHEBI:29105"/>
    </ligand>
</feature>
<feature type="binding site" evidence="1">
    <location>
        <position position="146"/>
    </location>
    <ligand>
        <name>Zn(2+)</name>
        <dbReference type="ChEBI" id="CHEBI:29105"/>
    </ligand>
</feature>
<feature type="binding site" evidence="1">
    <location>
        <position position="156"/>
    </location>
    <ligand>
        <name>Zn(2+)</name>
        <dbReference type="ChEBI" id="CHEBI:29105"/>
    </ligand>
</feature>
<feature type="binding site" evidence="1">
    <location>
        <position position="159"/>
    </location>
    <ligand>
        <name>Zn(2+)</name>
        <dbReference type="ChEBI" id="CHEBI:29105"/>
    </ligand>
</feature>
<feature type="binding site" evidence="1">
    <location>
        <position position="352"/>
    </location>
    <ligand>
        <name>ATP</name>
        <dbReference type="ChEBI" id="CHEBI:30616"/>
    </ligand>
</feature>
<name>SYM_AROAE</name>
<protein>
    <recommendedName>
        <fullName evidence="1">Methionine--tRNA ligase</fullName>
        <ecNumber evidence="1">6.1.1.10</ecNumber>
    </recommendedName>
    <alternativeName>
        <fullName evidence="1">Methionyl-tRNA synthetase</fullName>
        <shortName evidence="1">MetRS</shortName>
    </alternativeName>
</protein>